<keyword id="KW-0067">ATP-binding</keyword>
<keyword id="KW-0414">Isoprene biosynthesis</keyword>
<keyword id="KW-0418">Kinase</keyword>
<keyword id="KW-0547">Nucleotide-binding</keyword>
<keyword id="KW-0808">Transferase</keyword>
<evidence type="ECO:0000255" key="1">
    <source>
        <dbReference type="HAMAP-Rule" id="MF_00061"/>
    </source>
</evidence>
<evidence type="ECO:0000256" key="2">
    <source>
        <dbReference type="SAM" id="MobiDB-lite"/>
    </source>
</evidence>
<evidence type="ECO:0000305" key="3"/>
<protein>
    <recommendedName>
        <fullName evidence="1">4-diphosphocytidyl-2-C-methyl-D-erythritol kinase</fullName>
        <shortName evidence="1">CMK</shortName>
        <ecNumber evidence="1">2.7.1.148</ecNumber>
    </recommendedName>
    <alternativeName>
        <fullName evidence="1">4-(cytidine-5'-diphospho)-2-C-methyl-D-erythritol kinase</fullName>
    </alternativeName>
</protein>
<name>ISPE_CUTAK</name>
<sequence length="310" mass="32024">MTVTVRVSAKVNLALGVGGLAPDGFHPLATVFEAICIYDEVAVTRRDDSRITLTVSGEDADQVPTDETNLAWRAVELVREEFASEWGKRGHGADIHIDKSIPVAGGMAGGSADAAGALMAAAALCRLPYSPEELQPLAAQLGSDVPFCLTGGVALGRGRGDRLAPVICRGRHRWVFATSNQGLSTPAVYRRFDELGGTPGGETVPNDLISALTRGDLDAVAASLSNDLQAAAIDLRPELEEVLTVGREVGALTALVSGSGPTCAFLVRDTAGAKKVSAAVSNLPQVHRTRTARGPAAGAQLLPGPVGSFA</sequence>
<dbReference type="EC" id="2.7.1.148" evidence="1"/>
<dbReference type="EMBL" id="AE017283">
    <property type="protein sequence ID" value="AAT82280.1"/>
    <property type="status" value="ALT_INIT"/>
    <property type="molecule type" value="Genomic_DNA"/>
</dbReference>
<dbReference type="SMR" id="Q6AAD6"/>
<dbReference type="EnsemblBacteria" id="AAT82280">
    <property type="protein sequence ID" value="AAT82280"/>
    <property type="gene ID" value="PPA0527"/>
</dbReference>
<dbReference type="KEGG" id="pac:PPA0527"/>
<dbReference type="eggNOG" id="COG1947">
    <property type="taxonomic scope" value="Bacteria"/>
</dbReference>
<dbReference type="HOGENOM" id="CLU_053057_1_1_11"/>
<dbReference type="UniPathway" id="UPA00056">
    <property type="reaction ID" value="UER00094"/>
</dbReference>
<dbReference type="Proteomes" id="UP000000603">
    <property type="component" value="Chromosome"/>
</dbReference>
<dbReference type="GO" id="GO:0050515">
    <property type="term" value="F:4-(cytidine 5'-diphospho)-2-C-methyl-D-erythritol kinase activity"/>
    <property type="evidence" value="ECO:0007669"/>
    <property type="project" value="UniProtKB-UniRule"/>
</dbReference>
<dbReference type="GO" id="GO:0005524">
    <property type="term" value="F:ATP binding"/>
    <property type="evidence" value="ECO:0007669"/>
    <property type="project" value="UniProtKB-UniRule"/>
</dbReference>
<dbReference type="GO" id="GO:0019288">
    <property type="term" value="P:isopentenyl diphosphate biosynthetic process, methylerythritol 4-phosphate pathway"/>
    <property type="evidence" value="ECO:0007669"/>
    <property type="project" value="UniProtKB-UniRule"/>
</dbReference>
<dbReference type="GO" id="GO:0016114">
    <property type="term" value="P:terpenoid biosynthetic process"/>
    <property type="evidence" value="ECO:0007669"/>
    <property type="project" value="InterPro"/>
</dbReference>
<dbReference type="Gene3D" id="3.30.230.10">
    <property type="match status" value="1"/>
</dbReference>
<dbReference type="Gene3D" id="3.30.70.890">
    <property type="entry name" value="GHMP kinase, C-terminal domain"/>
    <property type="match status" value="1"/>
</dbReference>
<dbReference type="HAMAP" id="MF_00061">
    <property type="entry name" value="IspE"/>
    <property type="match status" value="1"/>
</dbReference>
<dbReference type="InterPro" id="IPR013750">
    <property type="entry name" value="GHMP_kinase_C_dom"/>
</dbReference>
<dbReference type="InterPro" id="IPR036554">
    <property type="entry name" value="GHMP_kinase_C_sf"/>
</dbReference>
<dbReference type="InterPro" id="IPR006204">
    <property type="entry name" value="GHMP_kinase_N_dom"/>
</dbReference>
<dbReference type="InterPro" id="IPR004424">
    <property type="entry name" value="IspE"/>
</dbReference>
<dbReference type="InterPro" id="IPR020568">
    <property type="entry name" value="Ribosomal_Su5_D2-typ_SF"/>
</dbReference>
<dbReference type="InterPro" id="IPR014721">
    <property type="entry name" value="Ribsml_uS5_D2-typ_fold_subgr"/>
</dbReference>
<dbReference type="NCBIfam" id="TIGR00154">
    <property type="entry name" value="ispE"/>
    <property type="match status" value="1"/>
</dbReference>
<dbReference type="NCBIfam" id="NF002870">
    <property type="entry name" value="PRK03188.1"/>
    <property type="match status" value="1"/>
</dbReference>
<dbReference type="PANTHER" id="PTHR43527">
    <property type="entry name" value="4-DIPHOSPHOCYTIDYL-2-C-METHYL-D-ERYTHRITOL KINASE, CHLOROPLASTIC"/>
    <property type="match status" value="1"/>
</dbReference>
<dbReference type="PANTHER" id="PTHR43527:SF2">
    <property type="entry name" value="4-DIPHOSPHOCYTIDYL-2-C-METHYL-D-ERYTHRITOL KINASE, CHLOROPLASTIC"/>
    <property type="match status" value="1"/>
</dbReference>
<dbReference type="Pfam" id="PF08544">
    <property type="entry name" value="GHMP_kinases_C"/>
    <property type="match status" value="1"/>
</dbReference>
<dbReference type="Pfam" id="PF00288">
    <property type="entry name" value="GHMP_kinases_N"/>
    <property type="match status" value="1"/>
</dbReference>
<dbReference type="PIRSF" id="PIRSF010376">
    <property type="entry name" value="IspE"/>
    <property type="match status" value="1"/>
</dbReference>
<dbReference type="SUPFAM" id="SSF55060">
    <property type="entry name" value="GHMP Kinase, C-terminal domain"/>
    <property type="match status" value="1"/>
</dbReference>
<dbReference type="SUPFAM" id="SSF54211">
    <property type="entry name" value="Ribosomal protein S5 domain 2-like"/>
    <property type="match status" value="1"/>
</dbReference>
<feature type="chain" id="PRO_0000235116" description="4-diphosphocytidyl-2-C-methyl-D-erythritol kinase">
    <location>
        <begin position="1"/>
        <end position="310"/>
    </location>
</feature>
<feature type="region of interest" description="Disordered" evidence="2">
    <location>
        <begin position="289"/>
        <end position="310"/>
    </location>
</feature>
<feature type="active site" evidence="1">
    <location>
        <position position="10"/>
    </location>
</feature>
<feature type="active site" evidence="1">
    <location>
        <position position="144"/>
    </location>
</feature>
<feature type="binding site" evidence="1">
    <location>
        <begin position="102"/>
        <end position="112"/>
    </location>
    <ligand>
        <name>ATP</name>
        <dbReference type="ChEBI" id="CHEBI:30616"/>
    </ligand>
</feature>
<comment type="function">
    <text evidence="1">Catalyzes the phosphorylation of the position 2 hydroxy group of 4-diphosphocytidyl-2C-methyl-D-erythritol.</text>
</comment>
<comment type="catalytic activity">
    <reaction evidence="1">
        <text>4-CDP-2-C-methyl-D-erythritol + ATP = 4-CDP-2-C-methyl-D-erythritol 2-phosphate + ADP + H(+)</text>
        <dbReference type="Rhea" id="RHEA:18437"/>
        <dbReference type="ChEBI" id="CHEBI:15378"/>
        <dbReference type="ChEBI" id="CHEBI:30616"/>
        <dbReference type="ChEBI" id="CHEBI:57823"/>
        <dbReference type="ChEBI" id="CHEBI:57919"/>
        <dbReference type="ChEBI" id="CHEBI:456216"/>
        <dbReference type="EC" id="2.7.1.148"/>
    </reaction>
</comment>
<comment type="pathway">
    <text evidence="1">Isoprenoid biosynthesis; isopentenyl diphosphate biosynthesis via DXP pathway; isopentenyl diphosphate from 1-deoxy-D-xylulose 5-phosphate: step 3/6.</text>
</comment>
<comment type="similarity">
    <text evidence="1">Belongs to the GHMP kinase family. IspE subfamily.</text>
</comment>
<comment type="sequence caution" evidence="3">
    <conflict type="erroneous initiation">
        <sequence resource="EMBL-CDS" id="AAT82280"/>
    </conflict>
</comment>
<proteinExistence type="inferred from homology"/>
<organism>
    <name type="scientific">Cutibacterium acnes (strain DSM 16379 / KPA171202)</name>
    <name type="common">Propionibacterium acnes</name>
    <dbReference type="NCBI Taxonomy" id="267747"/>
    <lineage>
        <taxon>Bacteria</taxon>
        <taxon>Bacillati</taxon>
        <taxon>Actinomycetota</taxon>
        <taxon>Actinomycetes</taxon>
        <taxon>Propionibacteriales</taxon>
        <taxon>Propionibacteriaceae</taxon>
        <taxon>Cutibacterium</taxon>
    </lineage>
</organism>
<accession>Q6AAD6</accession>
<gene>
    <name evidence="1" type="primary">ispE</name>
    <name type="ordered locus">PPA0527</name>
</gene>
<reference key="1">
    <citation type="journal article" date="2004" name="Science">
        <title>The complete genome sequence of Propionibacterium acnes, a commensal of human skin.</title>
        <authorList>
            <person name="Brueggemann H."/>
            <person name="Henne A."/>
            <person name="Hoster F."/>
            <person name="Liesegang H."/>
            <person name="Wiezer A."/>
            <person name="Strittmatter A."/>
            <person name="Hujer S."/>
            <person name="Duerre P."/>
            <person name="Gottschalk G."/>
        </authorList>
    </citation>
    <scope>NUCLEOTIDE SEQUENCE [LARGE SCALE GENOMIC DNA]</scope>
    <source>
        <strain>DSM 16379 / KPA171202</strain>
    </source>
</reference>